<comment type="function">
    <text evidence="3 4 5">Essential inner membrane component of the type IV pilus (T4P) that plays a role in surface and host cell adhesion, colonization, biofilm maturation, virulence, and twitching, a form of surface-associated motility facilitated by cycles of extension, adhesion, and retraction of T4P fibers. Controls both pilus assembly and disassembly and plays an important role in PilB localization to the complex and ATPase activity.</text>
</comment>
<comment type="subunit">
    <text evidence="1 5">Homotetramer (By similarity). Interacts with PilB (PubMed:23413032).</text>
</comment>
<comment type="subcellular location">
    <subcellularLocation>
        <location evidence="6">Cell inner membrane</location>
        <topology evidence="6">Multi-pass membrane protein</topology>
    </subcellularLocation>
</comment>
<comment type="disruption phenotype">
    <text evidence="3 5">Deletion mutants lack surface pili showing the essential role of PilC for type IV pilus (T4P) biogenesis (PubMed:23413032). In addition, PilC mutants show a diffuse cytoplasmic localization of PilB (PubMed:15659660).</text>
</comment>
<comment type="similarity">
    <text evidence="6">Belongs to the GSP F family.</text>
</comment>
<comment type="sequence caution" evidence="6">
    <conflict type="erroneous initiation">
        <sequence resource="EMBL-CDS" id="AAA25733"/>
    </conflict>
    <text>Extended N-terminus.</text>
</comment>
<reference key="1">
    <citation type="journal article" date="1990" name="J. Bacteriol.">
        <title>Products of three accessory genes, pilB, pilC, and pilD, are required for biogenesis of Pseudomonas aeruginosa pili.</title>
        <authorList>
            <person name="Nunn D."/>
            <person name="Bergman S."/>
            <person name="Lory S."/>
        </authorList>
    </citation>
    <scope>NUCLEOTIDE SEQUENCE [GENOMIC DNA]</scope>
    <scope>FUNCTION</scope>
    <source>
        <strain>PAK</strain>
    </source>
</reference>
<reference key="2">
    <citation type="journal article" date="2000" name="Nature">
        <title>Complete genome sequence of Pseudomonas aeruginosa PAO1, an opportunistic pathogen.</title>
        <authorList>
            <person name="Stover C.K."/>
            <person name="Pham X.-Q.T."/>
            <person name="Erwin A.L."/>
            <person name="Mizoguchi S.D."/>
            <person name="Warrener P."/>
            <person name="Hickey M.J."/>
            <person name="Brinkman F.S.L."/>
            <person name="Hufnagle W.O."/>
            <person name="Kowalik D.J."/>
            <person name="Lagrou M."/>
            <person name="Garber R.L."/>
            <person name="Goltry L."/>
            <person name="Tolentino E."/>
            <person name="Westbrock-Wadman S."/>
            <person name="Yuan Y."/>
            <person name="Brody L.L."/>
            <person name="Coulter S.N."/>
            <person name="Folger K.R."/>
            <person name="Kas A."/>
            <person name="Larbig K."/>
            <person name="Lim R.M."/>
            <person name="Smith K.A."/>
            <person name="Spencer D.H."/>
            <person name="Wong G.K.-S."/>
            <person name="Wu Z."/>
            <person name="Paulsen I.T."/>
            <person name="Reizer J."/>
            <person name="Saier M.H. Jr."/>
            <person name="Hancock R.E.W."/>
            <person name="Lory S."/>
            <person name="Olson M.V."/>
        </authorList>
    </citation>
    <scope>NUCLEOTIDE SEQUENCE [LARGE SCALE GENOMIC DNA]</scope>
    <source>
        <strain>ATCC 15692 / DSM 22644 / CIP 104116 / JCM 14847 / LMG 12228 / 1C / PRS 101 / PAO1</strain>
    </source>
</reference>
<reference key="3">
    <citation type="journal article" date="2005" name="J. Bacteriol.">
        <title>Disparate subcellular localization patterns of Pseudomonas aeruginosa Type IV pilus ATPases involved in twitching motility.</title>
        <authorList>
            <person name="Chiang P."/>
            <person name="Habash M."/>
            <person name="Burrows L.L."/>
        </authorList>
    </citation>
    <scope>FUNCTION</scope>
    <scope>DISRUPTION PHENOTYPE</scope>
</reference>
<reference key="4">
    <citation type="journal article" date="2013" name="J. Biol. Chem.">
        <title>The platform protein is essential for type IV pilus biogenesis.</title>
        <authorList>
            <person name="Takhar H.K."/>
            <person name="Kemp K."/>
            <person name="Kim M."/>
            <person name="Howell P.L."/>
            <person name="Burrows L.L."/>
        </authorList>
    </citation>
    <scope>INTERACTION WITH PILB</scope>
    <scope>FUNCTION</scope>
    <scope>DISRUPTION PHENOTYPE</scope>
</reference>
<keyword id="KW-0997">Cell inner membrane</keyword>
<keyword id="KW-1003">Cell membrane</keyword>
<keyword id="KW-1029">Fimbrium biogenesis</keyword>
<keyword id="KW-0472">Membrane</keyword>
<keyword id="KW-0653">Protein transport</keyword>
<keyword id="KW-1185">Reference proteome</keyword>
<keyword id="KW-0812">Transmembrane</keyword>
<keyword id="KW-1133">Transmembrane helix</keyword>
<keyword id="KW-0813">Transport</keyword>
<proteinExistence type="evidence at protein level"/>
<accession>P22609</accession>
<accession>Q9HVP9</accession>
<sequence length="374" mass="40887">MLVKAHLRKQGINPLKVRKKGISLLGAGKKVKPMDIALFTRQMATMMGAGVPLLQSFDIIGEGFDNPNMRKLVDEIKQEVSSGNSLANSLRKKPQYFDELYCNLVDAGEQSGALENLLDRVATYKEKTESLKAKIRKAMTYPIAVIIVALIVSAILLIKVVPQFQSVFQGFGAELPAFTQMVVNLSEFLQEWWLAVIVGVGAIGFTFKELHKRSKKFRDTLDRTILKLPIFGGIVYKSAVARYARTLSTTFAAGVPLVDALDSVSGATGNIVFKNAVSKIKQDVSTGMQLNFSMRTTSVFPNMAIQMTAIGEESGSLDEMLSKVASYYEEEVDNAVDNLTTLMEPMIMAVLGVLVGGLIVAMYLPIFQLGNVVG</sequence>
<feature type="chain" id="PRO_0000207840" description="Type IV pilus assembly protein PilC">
    <location>
        <begin position="1"/>
        <end position="374"/>
    </location>
</feature>
<feature type="transmembrane region" description="Helical" evidence="2">
    <location>
        <begin position="138"/>
        <end position="158"/>
    </location>
</feature>
<feature type="transmembrane region" description="Helical" evidence="2">
    <location>
        <begin position="187"/>
        <end position="207"/>
    </location>
</feature>
<feature type="transmembrane region" description="Helical" evidence="2">
    <location>
        <begin position="347"/>
        <end position="367"/>
    </location>
</feature>
<feature type="sequence variant" description="In strain: PAK.">
    <original>R</original>
    <variation>K</variation>
    <location>
        <position position="136"/>
    </location>
</feature>
<feature type="sequence variant" description="In strain: PAK.">
    <original>Q</original>
    <variation>E</variation>
    <location>
        <position position="169"/>
    </location>
</feature>
<feature type="sequence variant" description="In strain: PAK.">
    <original>V</original>
    <variation>I</variation>
    <location>
        <position position="182"/>
    </location>
</feature>
<feature type="sequence variant" description="In strain: PAK.">
    <original>L</original>
    <variation>M</variation>
    <location>
        <position position="189"/>
    </location>
</feature>
<feature type="sequence variant" description="In strain: PAK.">
    <original>K</original>
    <variation>Q</variation>
    <location>
        <position position="215"/>
    </location>
</feature>
<feature type="sequence conflict" description="In Ref. 1; AE004091." evidence="6" ref="1">
    <original>LAVIVGVGAIGFT</original>
    <variation>FFIILAIAIFGFA</variation>
    <location>
        <begin position="194"/>
        <end position="206"/>
    </location>
</feature>
<dbReference type="EMBL" id="M32066">
    <property type="protein sequence ID" value="AAA25733.1"/>
    <property type="status" value="ALT_INIT"/>
    <property type="molecule type" value="Genomic_DNA"/>
</dbReference>
<dbReference type="EMBL" id="AE004091">
    <property type="status" value="NOT_ANNOTATED_CDS"/>
    <property type="molecule type" value="Genomic_DNA"/>
</dbReference>
<dbReference type="PIR" id="B35384">
    <property type="entry name" value="B35384"/>
</dbReference>
<dbReference type="PIR" id="C83078">
    <property type="entry name" value="C83078"/>
</dbReference>
<dbReference type="SMR" id="P22609"/>
<dbReference type="TCDB" id="3.A.15.2.1">
    <property type="family name" value="the outer membrane protein secreting main terminal branch (mtb) family"/>
</dbReference>
<dbReference type="InParanoid" id="P22609"/>
<dbReference type="PhylomeDB" id="P22609"/>
<dbReference type="Proteomes" id="UP000002438">
    <property type="component" value="Chromosome"/>
</dbReference>
<dbReference type="GO" id="GO:0005886">
    <property type="term" value="C:plasma membrane"/>
    <property type="evidence" value="ECO:0000318"/>
    <property type="project" value="GO_Central"/>
</dbReference>
<dbReference type="GO" id="GO:0015628">
    <property type="term" value="P:protein secretion by the type II secretion system"/>
    <property type="evidence" value="ECO:0000318"/>
    <property type="project" value="GO_Central"/>
</dbReference>
<dbReference type="FunFam" id="1.20.81.30:FF:000001">
    <property type="entry name" value="Type II secretion system protein F"/>
    <property type="match status" value="2"/>
</dbReference>
<dbReference type="Gene3D" id="1.20.81.30">
    <property type="entry name" value="Type II secretion system (T2SS), domain F"/>
    <property type="match status" value="2"/>
</dbReference>
<dbReference type="InterPro" id="IPR003004">
    <property type="entry name" value="GspF/PilC"/>
</dbReference>
<dbReference type="InterPro" id="IPR001992">
    <property type="entry name" value="T2SS_GspF/T4SS_PilC_CS"/>
</dbReference>
<dbReference type="InterPro" id="IPR018076">
    <property type="entry name" value="T2SS_GspF_dom"/>
</dbReference>
<dbReference type="InterPro" id="IPR042094">
    <property type="entry name" value="T2SS_GspF_sf"/>
</dbReference>
<dbReference type="PANTHER" id="PTHR30012">
    <property type="entry name" value="GENERAL SECRETION PATHWAY PROTEIN"/>
    <property type="match status" value="1"/>
</dbReference>
<dbReference type="PANTHER" id="PTHR30012:SF7">
    <property type="entry name" value="PROTEIN TRANSPORT PROTEIN HOFC HOMOLOG"/>
    <property type="match status" value="1"/>
</dbReference>
<dbReference type="Pfam" id="PF00482">
    <property type="entry name" value="T2SSF"/>
    <property type="match status" value="2"/>
</dbReference>
<dbReference type="PRINTS" id="PR00812">
    <property type="entry name" value="BCTERIALGSPF"/>
</dbReference>
<dbReference type="PROSITE" id="PS00874">
    <property type="entry name" value="T2SP_F"/>
    <property type="match status" value="1"/>
</dbReference>
<protein>
    <recommendedName>
        <fullName>Type IV pilus assembly protein PilC</fullName>
    </recommendedName>
</protein>
<evidence type="ECO:0000250" key="1">
    <source>
        <dbReference type="UniProtKB" id="Q5SK58"/>
    </source>
</evidence>
<evidence type="ECO:0000255" key="2"/>
<evidence type="ECO:0000269" key="3">
    <source>
    </source>
</evidence>
<evidence type="ECO:0000269" key="4">
    <source>
    </source>
</evidence>
<evidence type="ECO:0000269" key="5">
    <source>
    </source>
</evidence>
<evidence type="ECO:0000305" key="6"/>
<organism>
    <name type="scientific">Pseudomonas aeruginosa (strain ATCC 15692 / DSM 22644 / CIP 104116 / JCM 14847 / LMG 12228 / 1C / PRS 101 / PAO1)</name>
    <dbReference type="NCBI Taxonomy" id="208964"/>
    <lineage>
        <taxon>Bacteria</taxon>
        <taxon>Pseudomonadati</taxon>
        <taxon>Pseudomonadota</taxon>
        <taxon>Gammaproteobacteria</taxon>
        <taxon>Pseudomonadales</taxon>
        <taxon>Pseudomonadaceae</taxon>
        <taxon>Pseudomonas</taxon>
    </lineage>
</organism>
<name>PILC_PSEAE</name>
<gene>
    <name type="primary">pilC</name>
    <name type="ordered locus">PA4527</name>
</gene>